<protein>
    <recommendedName>
        <fullName evidence="1">Probable tRNA pseudouridine synthase D</fullName>
        <ecNumber evidence="1">5.4.99.27</ecNumber>
    </recommendedName>
    <alternativeName>
        <fullName evidence="1">tRNA pseudouridine(13) synthase</fullName>
    </alternativeName>
    <alternativeName>
        <fullName evidence="1">tRNA pseudouridylate synthase D</fullName>
    </alternativeName>
    <alternativeName>
        <fullName evidence="1">tRNA-uridine isomerase D</fullName>
    </alternativeName>
</protein>
<accession>C6A1K9</accession>
<keyword id="KW-0413">Isomerase</keyword>
<keyword id="KW-1185">Reference proteome</keyword>
<keyword id="KW-0819">tRNA processing</keyword>
<sequence length="422" mass="48394">MDYKQFFSNFRYLSSSKGIGGKIKSKPEDFIVREVIPRSVFRSDQCLIYLIKKQNWETMAAIKEIAKRIGIDYKNVGFAGTKDRHAITYQYISICSENLESIKESIASLNIEGISLKFVGRGKPLKLGMLIGNHFQIILRGLEDPERALERTKKILKELKLKGGFPNYFGSQRFGERRVINHEVGKLLLKGDFEGAALKFLGEYTGDMTGDEARKDFLKTGDVEKALEEFPNFLRYERAMLYKYRETRSWKKAFAVLPRPIVRIFIHSYQSYLFNKALSRRIEEGLSLNEALSGDIVCQVKKGLPIRNKTFKVTERSLKFVNERVKRGEAMVTGPVFGFASRLADGPMGKIEREILDEEGIDLNGFKMKQLPILAEAGGRRELLIKPRGFKYKSSEEGLIFRFFLPKGVYATSVMREIMKDH</sequence>
<name>TRUD_THESM</name>
<gene>
    <name evidence="1" type="primary">truD</name>
    <name type="ordered locus">TSIB_0438</name>
</gene>
<reference key="1">
    <citation type="journal article" date="2009" name="Appl. Environ. Microbiol.">
        <title>Metabolic versatility and indigenous origin of the archaeon Thermococcus sibiricus, isolated from a siberian oil reservoir, as revealed by genome analysis.</title>
        <authorList>
            <person name="Mardanov A.V."/>
            <person name="Ravin N.V."/>
            <person name="Svetlitchnyi V.A."/>
            <person name="Beletsky A.V."/>
            <person name="Miroshnichenko M.L."/>
            <person name="Bonch-Osmolovskaya E.A."/>
            <person name="Skryabin K.G."/>
        </authorList>
    </citation>
    <scope>NUCLEOTIDE SEQUENCE [LARGE SCALE GENOMIC DNA]</scope>
    <source>
        <strain>DSM 12597 / MM 739</strain>
    </source>
</reference>
<dbReference type="EC" id="5.4.99.27" evidence="1"/>
<dbReference type="EMBL" id="CP001463">
    <property type="protein sequence ID" value="ACS89504.1"/>
    <property type="molecule type" value="Genomic_DNA"/>
</dbReference>
<dbReference type="RefSeq" id="WP_015848724.1">
    <property type="nucleotide sequence ID" value="NC_012883.1"/>
</dbReference>
<dbReference type="SMR" id="C6A1K9"/>
<dbReference type="STRING" id="604354.TSIB_0438"/>
<dbReference type="GeneID" id="8095424"/>
<dbReference type="KEGG" id="tsi:TSIB_0438"/>
<dbReference type="eggNOG" id="arCOG04252">
    <property type="taxonomic scope" value="Archaea"/>
</dbReference>
<dbReference type="HOGENOM" id="CLU_005281_4_1_2"/>
<dbReference type="OrthoDB" id="1798at2157"/>
<dbReference type="Proteomes" id="UP000009079">
    <property type="component" value="Chromosome"/>
</dbReference>
<dbReference type="GO" id="GO:0003723">
    <property type="term" value="F:RNA binding"/>
    <property type="evidence" value="ECO:0007669"/>
    <property type="project" value="InterPro"/>
</dbReference>
<dbReference type="GO" id="GO:0160150">
    <property type="term" value="F:tRNA pseudouridine(13) synthase activity"/>
    <property type="evidence" value="ECO:0007669"/>
    <property type="project" value="UniProtKB-EC"/>
</dbReference>
<dbReference type="GO" id="GO:0031119">
    <property type="term" value="P:tRNA pseudouridine synthesis"/>
    <property type="evidence" value="ECO:0007669"/>
    <property type="project" value="UniProtKB-UniRule"/>
</dbReference>
<dbReference type="FunFam" id="3.30.70.3160:FF:000001">
    <property type="entry name" value="Probable tRNA pseudouridine synthase D"/>
    <property type="match status" value="1"/>
</dbReference>
<dbReference type="Gene3D" id="1.10.1510.30">
    <property type="match status" value="1"/>
</dbReference>
<dbReference type="Gene3D" id="3.30.70.3160">
    <property type="match status" value="1"/>
</dbReference>
<dbReference type="Gene3D" id="3.30.2350.20">
    <property type="entry name" value="TruD, catalytic domain"/>
    <property type="match status" value="1"/>
</dbReference>
<dbReference type="HAMAP" id="MF_01082">
    <property type="entry name" value="TruD"/>
    <property type="match status" value="1"/>
</dbReference>
<dbReference type="InterPro" id="IPR020103">
    <property type="entry name" value="PsdUridine_synth_cat_dom_sf"/>
</dbReference>
<dbReference type="InterPro" id="IPR001656">
    <property type="entry name" value="PsdUridine_synth_TruD"/>
</dbReference>
<dbReference type="InterPro" id="IPR020119">
    <property type="entry name" value="PsdUridine_synth_TruD_CS"/>
</dbReference>
<dbReference type="InterPro" id="IPR011760">
    <property type="entry name" value="PsdUridine_synth_TruD_insert"/>
</dbReference>
<dbReference type="InterPro" id="IPR042214">
    <property type="entry name" value="TruD_catalytic"/>
</dbReference>
<dbReference type="NCBIfam" id="TIGR00094">
    <property type="entry name" value="tRNA_TruD_broad"/>
    <property type="match status" value="1"/>
</dbReference>
<dbReference type="PANTHER" id="PTHR13326:SF21">
    <property type="entry name" value="PSEUDOURIDYLATE SYNTHASE PUS7L"/>
    <property type="match status" value="1"/>
</dbReference>
<dbReference type="PANTHER" id="PTHR13326">
    <property type="entry name" value="TRNA PSEUDOURIDINE SYNTHASE D"/>
    <property type="match status" value="1"/>
</dbReference>
<dbReference type="Pfam" id="PF01142">
    <property type="entry name" value="TruD"/>
    <property type="match status" value="1"/>
</dbReference>
<dbReference type="PIRSF" id="PIRSF037016">
    <property type="entry name" value="Pseudouridin_synth_euk_prd"/>
    <property type="match status" value="1"/>
</dbReference>
<dbReference type="SUPFAM" id="SSF55120">
    <property type="entry name" value="Pseudouridine synthase"/>
    <property type="match status" value="1"/>
</dbReference>
<dbReference type="PROSITE" id="PS50984">
    <property type="entry name" value="TRUD"/>
    <property type="match status" value="1"/>
</dbReference>
<dbReference type="PROSITE" id="PS01268">
    <property type="entry name" value="UPF0024"/>
    <property type="match status" value="1"/>
</dbReference>
<comment type="function">
    <text evidence="1">Could be responsible for synthesis of pseudouridine from uracil-13 in transfer RNAs.</text>
</comment>
<comment type="catalytic activity">
    <reaction evidence="1">
        <text>uridine(13) in tRNA = pseudouridine(13) in tRNA</text>
        <dbReference type="Rhea" id="RHEA:42540"/>
        <dbReference type="Rhea" id="RHEA-COMP:10105"/>
        <dbReference type="Rhea" id="RHEA-COMP:10106"/>
        <dbReference type="ChEBI" id="CHEBI:65314"/>
        <dbReference type="ChEBI" id="CHEBI:65315"/>
        <dbReference type="EC" id="5.4.99.27"/>
    </reaction>
</comment>
<comment type="similarity">
    <text evidence="1">Belongs to the pseudouridine synthase TruD family.</text>
</comment>
<proteinExistence type="inferred from homology"/>
<feature type="chain" id="PRO_1000213518" description="Probable tRNA pseudouridine synthase D">
    <location>
        <begin position="1"/>
        <end position="422"/>
    </location>
</feature>
<feature type="domain" description="TRUD" evidence="1">
    <location>
        <begin position="164"/>
        <end position="386"/>
    </location>
</feature>
<feature type="active site" description="Nucleophile" evidence="1">
    <location>
        <position position="83"/>
    </location>
</feature>
<organism>
    <name type="scientific">Thermococcus sibiricus (strain DSM 12597 / MM 739)</name>
    <dbReference type="NCBI Taxonomy" id="604354"/>
    <lineage>
        <taxon>Archaea</taxon>
        <taxon>Methanobacteriati</taxon>
        <taxon>Methanobacteriota</taxon>
        <taxon>Thermococci</taxon>
        <taxon>Thermococcales</taxon>
        <taxon>Thermococcaceae</taxon>
        <taxon>Thermococcus</taxon>
    </lineage>
</organism>
<evidence type="ECO:0000255" key="1">
    <source>
        <dbReference type="HAMAP-Rule" id="MF_01082"/>
    </source>
</evidence>